<dbReference type="EMBL" id="AE006468">
    <property type="protein sequence ID" value="AAL23064.1"/>
    <property type="molecule type" value="Genomic_DNA"/>
</dbReference>
<dbReference type="RefSeq" id="NP_463105.1">
    <property type="nucleotide sequence ID" value="NC_003197.2"/>
</dbReference>
<dbReference type="RefSeq" id="WP_000981150.1">
    <property type="nucleotide sequence ID" value="NC_003197.2"/>
</dbReference>
<dbReference type="SMR" id="Q7CPB2"/>
<dbReference type="STRING" id="99287.STM4240"/>
<dbReference type="PaxDb" id="99287-STM4240"/>
<dbReference type="GeneID" id="1255766"/>
<dbReference type="KEGG" id="stm:STM4240"/>
<dbReference type="PATRIC" id="fig|99287.12.peg.4460"/>
<dbReference type="HOGENOM" id="CLU_135567_4_1_6"/>
<dbReference type="OMA" id="WERDTRW"/>
<dbReference type="PhylomeDB" id="Q7CPB2"/>
<dbReference type="BioCyc" id="SENT99287:STM4240-MONOMER"/>
<dbReference type="Proteomes" id="UP000001014">
    <property type="component" value="Chromosome"/>
</dbReference>
<dbReference type="FunFam" id="1.10.1470.10:FF:000001">
    <property type="entry name" value="CsbD family protein"/>
    <property type="match status" value="1"/>
</dbReference>
<dbReference type="Gene3D" id="1.10.1470.10">
    <property type="entry name" value="YjbJ"/>
    <property type="match status" value="1"/>
</dbReference>
<dbReference type="InterPro" id="IPR008462">
    <property type="entry name" value="CsbD"/>
</dbReference>
<dbReference type="InterPro" id="IPR050423">
    <property type="entry name" value="UPF0337_stress_rsp"/>
</dbReference>
<dbReference type="InterPro" id="IPR026042">
    <property type="entry name" value="YjbJ"/>
</dbReference>
<dbReference type="InterPro" id="IPR036629">
    <property type="entry name" value="YjbJ_sf"/>
</dbReference>
<dbReference type="NCBIfam" id="NF007748">
    <property type="entry name" value="PRK10428.1"/>
    <property type="match status" value="1"/>
</dbReference>
<dbReference type="PANTHER" id="PTHR34977">
    <property type="entry name" value="UPF0337 PROTEIN YJBJ"/>
    <property type="match status" value="1"/>
</dbReference>
<dbReference type="PANTHER" id="PTHR34977:SF1">
    <property type="entry name" value="UPF0337 PROTEIN YJBJ"/>
    <property type="match status" value="1"/>
</dbReference>
<dbReference type="Pfam" id="PF05532">
    <property type="entry name" value="CsbD"/>
    <property type="match status" value="1"/>
</dbReference>
<dbReference type="PIRSF" id="PIRSF039008">
    <property type="entry name" value="YjbJ"/>
    <property type="match status" value="1"/>
</dbReference>
<dbReference type="SUPFAM" id="SSF69047">
    <property type="entry name" value="Hypothetical protein YjbJ"/>
    <property type="match status" value="1"/>
</dbReference>
<evidence type="ECO:0000305" key="1"/>
<organism>
    <name type="scientific">Salmonella typhimurium (strain LT2 / SGSC1412 / ATCC 700720)</name>
    <dbReference type="NCBI Taxonomy" id="99287"/>
    <lineage>
        <taxon>Bacteria</taxon>
        <taxon>Pseudomonadati</taxon>
        <taxon>Pseudomonadota</taxon>
        <taxon>Gammaproteobacteria</taxon>
        <taxon>Enterobacterales</taxon>
        <taxon>Enterobacteriaceae</taxon>
        <taxon>Salmonella</taxon>
    </lineage>
</organism>
<comment type="similarity">
    <text evidence="1">Belongs to the UPF0337 (CsbD) family.</text>
</comment>
<gene>
    <name type="primary">yjbJ</name>
    <name type="ordered locus">STM4240</name>
</gene>
<name>YJBJ_SALTY</name>
<feature type="chain" id="PRO_0000210030" description="UPF0337 protein YjbJ">
    <location>
        <begin position="1"/>
        <end position="70"/>
    </location>
</feature>
<proteinExistence type="inferred from homology"/>
<protein>
    <recommendedName>
        <fullName>UPF0337 protein YjbJ</fullName>
    </recommendedName>
</protein>
<accession>Q7CPB2</accession>
<reference key="1">
    <citation type="journal article" date="2001" name="Nature">
        <title>Complete genome sequence of Salmonella enterica serovar Typhimurium LT2.</title>
        <authorList>
            <person name="McClelland M."/>
            <person name="Sanderson K.E."/>
            <person name="Spieth J."/>
            <person name="Clifton S.W."/>
            <person name="Latreille P."/>
            <person name="Courtney L."/>
            <person name="Porwollik S."/>
            <person name="Ali J."/>
            <person name="Dante M."/>
            <person name="Du F."/>
            <person name="Hou S."/>
            <person name="Layman D."/>
            <person name="Leonard S."/>
            <person name="Nguyen C."/>
            <person name="Scott K."/>
            <person name="Holmes A."/>
            <person name="Grewal N."/>
            <person name="Mulvaney E."/>
            <person name="Ryan E."/>
            <person name="Sun H."/>
            <person name="Florea L."/>
            <person name="Miller W."/>
            <person name="Stoneking T."/>
            <person name="Nhan M."/>
            <person name="Waterston R."/>
            <person name="Wilson R.K."/>
        </authorList>
    </citation>
    <scope>NUCLEOTIDE SEQUENCE [LARGE SCALE GENOMIC DNA]</scope>
    <source>
        <strain>LT2 / SGSC1412 / ATCC 700720</strain>
    </source>
</reference>
<sequence>MMNKDEAGGNWKQFKGKMKEQWGKLTDDDMTVIEGKRDQLVGKIQERYGYQKDQAEKEVVDWETRNNYRW</sequence>
<keyword id="KW-1185">Reference proteome</keyword>